<reference key="1">
    <citation type="submission" date="2008-04" db="EMBL/GenBank/DDBJ databases">
        <title>Complete sequence of Clostridium botulinum strain Eklund.</title>
        <authorList>
            <person name="Brinkac L.M."/>
            <person name="Brown J.L."/>
            <person name="Bruce D."/>
            <person name="Detter C."/>
            <person name="Munk C."/>
            <person name="Smith L.A."/>
            <person name="Smith T.J."/>
            <person name="Sutton G."/>
            <person name="Brettin T.S."/>
        </authorList>
    </citation>
    <scope>NUCLEOTIDE SEQUENCE [LARGE SCALE GENOMIC DNA]</scope>
    <source>
        <strain>Eklund 17B / Type B</strain>
    </source>
</reference>
<evidence type="ECO:0000255" key="1">
    <source>
        <dbReference type="HAMAP-Rule" id="MF_01438"/>
    </source>
</evidence>
<evidence type="ECO:0000255" key="2">
    <source>
        <dbReference type="PROSITE-ProRule" id="PRU01130"/>
    </source>
</evidence>
<protein>
    <recommendedName>
        <fullName evidence="1">DNA integrity scanning protein DisA</fullName>
    </recommendedName>
    <alternativeName>
        <fullName evidence="1">Cyclic di-AMP synthase</fullName>
        <shortName evidence="1">c-di-AMP synthase</shortName>
    </alternativeName>
    <alternativeName>
        <fullName evidence="1">Diadenylate cyclase</fullName>
        <ecNumber evidence="1">2.7.7.85</ecNumber>
    </alternativeName>
</protein>
<accession>B2TIF1</accession>
<gene>
    <name evidence="1" type="primary">disA</name>
    <name type="ordered locus">CLL_A0213</name>
</gene>
<sequence length="354" mass="39844">MRLEKGMKIKDTLKIMCPGTQLREGLENILRAKTGGLIVIGDNKEVMDTVDGGFNLNSDYSPSYVYELAKMDGAIVISEDLKKIVCANAQLIPDPSIVTHETGTRHRTAHRIAKQTNNIVIAISQRRNIITVYKGDIKYVLRDSSVILARANQAIQTLEKYVSVLERVINNLNLLEFQDLTTLFDVVTAIQRTEMVMRIVEEINMYILELGNEGRLISMQLNELVKHIERDGILLIRDYCKDEDGHNEVYEQIQKLSATELLDLDAIARVLGHAGESLVDTLISAKGYRILGKVPRIPSTVIENLIKEFKELNSVIEADIDELDIVEGIGEARAKAIKDGLKRIREQILLNKKI</sequence>
<proteinExistence type="inferred from homology"/>
<name>DISA_CLOBB</name>
<dbReference type="EC" id="2.7.7.85" evidence="1"/>
<dbReference type="EMBL" id="CP001056">
    <property type="protein sequence ID" value="ACD22782.1"/>
    <property type="molecule type" value="Genomic_DNA"/>
</dbReference>
<dbReference type="SMR" id="B2TIF1"/>
<dbReference type="KEGG" id="cbk:CLL_A0213"/>
<dbReference type="PATRIC" id="fig|935198.13.peg.187"/>
<dbReference type="HOGENOM" id="CLU_787128_0_0_9"/>
<dbReference type="Proteomes" id="UP000001195">
    <property type="component" value="Chromosome"/>
</dbReference>
<dbReference type="GO" id="GO:0004016">
    <property type="term" value="F:adenylate cyclase activity"/>
    <property type="evidence" value="ECO:0007669"/>
    <property type="project" value="TreeGrafter"/>
</dbReference>
<dbReference type="GO" id="GO:0005524">
    <property type="term" value="F:ATP binding"/>
    <property type="evidence" value="ECO:0007669"/>
    <property type="project" value="UniProtKB-UniRule"/>
</dbReference>
<dbReference type="GO" id="GO:0106408">
    <property type="term" value="F:diadenylate cyclase activity"/>
    <property type="evidence" value="ECO:0007669"/>
    <property type="project" value="UniProtKB-EC"/>
</dbReference>
<dbReference type="GO" id="GO:0003677">
    <property type="term" value="F:DNA binding"/>
    <property type="evidence" value="ECO:0007669"/>
    <property type="project" value="UniProtKB-UniRule"/>
</dbReference>
<dbReference type="GO" id="GO:0006281">
    <property type="term" value="P:DNA repair"/>
    <property type="evidence" value="ECO:0007669"/>
    <property type="project" value="UniProtKB-UniRule"/>
</dbReference>
<dbReference type="FunFam" id="3.40.1700.10:FF:000001">
    <property type="entry name" value="DNA integrity scanning protein DisA"/>
    <property type="match status" value="1"/>
</dbReference>
<dbReference type="Gene3D" id="1.10.150.20">
    <property type="entry name" value="5' to 3' exonuclease, C-terminal subdomain"/>
    <property type="match status" value="1"/>
</dbReference>
<dbReference type="Gene3D" id="1.20.1260.110">
    <property type="entry name" value="DNA integrity scanning linker region"/>
    <property type="match status" value="1"/>
</dbReference>
<dbReference type="Gene3D" id="3.40.1700.10">
    <property type="entry name" value="DNA integrity scanning protein, DisA, N-terminal domain"/>
    <property type="match status" value="1"/>
</dbReference>
<dbReference type="HAMAP" id="MF_01438">
    <property type="entry name" value="DisA"/>
    <property type="match status" value="1"/>
</dbReference>
<dbReference type="InterPro" id="IPR050338">
    <property type="entry name" value="DisA"/>
</dbReference>
<dbReference type="InterPro" id="IPR038331">
    <property type="entry name" value="DisA_sf"/>
</dbReference>
<dbReference type="InterPro" id="IPR036888">
    <property type="entry name" value="DNA_integrity_DisA_N_sf"/>
</dbReference>
<dbReference type="InterPro" id="IPR018906">
    <property type="entry name" value="DNA_integrity_scan_DisA_link"/>
</dbReference>
<dbReference type="InterPro" id="IPR003390">
    <property type="entry name" value="DNA_integrity_scan_DisA_N"/>
</dbReference>
<dbReference type="InterPro" id="IPR023763">
    <property type="entry name" value="DNA_integrity_scanning_protein"/>
</dbReference>
<dbReference type="InterPro" id="IPR010994">
    <property type="entry name" value="RuvA_2-like"/>
</dbReference>
<dbReference type="NCBIfam" id="NF010009">
    <property type="entry name" value="PRK13482.1"/>
    <property type="match status" value="1"/>
</dbReference>
<dbReference type="PANTHER" id="PTHR34185">
    <property type="entry name" value="DIADENYLATE CYCLASE"/>
    <property type="match status" value="1"/>
</dbReference>
<dbReference type="PANTHER" id="PTHR34185:SF3">
    <property type="entry name" value="DNA INTEGRITY SCANNING PROTEIN DISA"/>
    <property type="match status" value="1"/>
</dbReference>
<dbReference type="Pfam" id="PF02457">
    <property type="entry name" value="DAC"/>
    <property type="match status" value="1"/>
</dbReference>
<dbReference type="Pfam" id="PF10635">
    <property type="entry name" value="DisA-linker"/>
    <property type="match status" value="1"/>
</dbReference>
<dbReference type="SUPFAM" id="SSF47781">
    <property type="entry name" value="RuvA domain 2-like"/>
    <property type="match status" value="1"/>
</dbReference>
<dbReference type="SUPFAM" id="SSF143597">
    <property type="entry name" value="YojJ-like"/>
    <property type="match status" value="1"/>
</dbReference>
<dbReference type="PROSITE" id="PS51794">
    <property type="entry name" value="DAC"/>
    <property type="match status" value="1"/>
</dbReference>
<keyword id="KW-0067">ATP-binding</keyword>
<keyword id="KW-0227">DNA damage</keyword>
<keyword id="KW-0234">DNA repair</keyword>
<keyword id="KW-0238">DNA-binding</keyword>
<keyword id="KW-0460">Magnesium</keyword>
<keyword id="KW-0547">Nucleotide-binding</keyword>
<keyword id="KW-0548">Nucleotidyltransferase</keyword>
<keyword id="KW-0808">Transferase</keyword>
<organism>
    <name type="scientific">Clostridium botulinum (strain Eklund 17B / Type B)</name>
    <dbReference type="NCBI Taxonomy" id="935198"/>
    <lineage>
        <taxon>Bacteria</taxon>
        <taxon>Bacillati</taxon>
        <taxon>Bacillota</taxon>
        <taxon>Clostridia</taxon>
        <taxon>Eubacteriales</taxon>
        <taxon>Clostridiaceae</taxon>
        <taxon>Clostridium</taxon>
    </lineage>
</organism>
<feature type="chain" id="PRO_1000145859" description="DNA integrity scanning protein DisA">
    <location>
        <begin position="1"/>
        <end position="354"/>
    </location>
</feature>
<feature type="domain" description="DAC" evidence="2">
    <location>
        <begin position="6"/>
        <end position="144"/>
    </location>
</feature>
<feature type="binding site" evidence="1">
    <location>
        <position position="73"/>
    </location>
    <ligand>
        <name>ATP</name>
        <dbReference type="ChEBI" id="CHEBI:30616"/>
    </ligand>
</feature>
<feature type="binding site" evidence="1">
    <location>
        <position position="91"/>
    </location>
    <ligand>
        <name>ATP</name>
        <dbReference type="ChEBI" id="CHEBI:30616"/>
    </ligand>
</feature>
<feature type="binding site" evidence="1">
    <location>
        <begin position="104"/>
        <end position="108"/>
    </location>
    <ligand>
        <name>ATP</name>
        <dbReference type="ChEBI" id="CHEBI:30616"/>
    </ligand>
</feature>
<comment type="function">
    <text evidence="1">Participates in a DNA-damage check-point that is active prior to asymmetric division when DNA is damaged. DisA forms globular foci that rapidly scan along the chromosomes during sporulation, searching for lesions. When a lesion is present, DisA pauses at the lesion site. This triggers a cellular response that culminates in a temporary block in sporulation initiation.</text>
</comment>
<comment type="function">
    <text evidence="1">Also has diadenylate cyclase activity, catalyzing the condensation of 2 ATP molecules into cyclic di-AMP (c-di-AMP). c-di-AMP acts as a signaling molecule that couples DNA integrity with progression of sporulation. The rise in c-di-AMP level generated by DisA while scanning the chromosome, operates as a positive signal that advances sporulation; upon encountering a lesion, the DisA focus arrests at the damaged site and halts c-di-AMP synthesis.</text>
</comment>
<comment type="catalytic activity">
    <reaction evidence="1">
        <text>2 ATP = 3',3'-c-di-AMP + 2 diphosphate</text>
        <dbReference type="Rhea" id="RHEA:35655"/>
        <dbReference type="ChEBI" id="CHEBI:30616"/>
        <dbReference type="ChEBI" id="CHEBI:33019"/>
        <dbReference type="ChEBI" id="CHEBI:71500"/>
        <dbReference type="EC" id="2.7.7.85"/>
    </reaction>
</comment>
<comment type="cofactor">
    <cofactor evidence="1">
        <name>Mg(2+)</name>
        <dbReference type="ChEBI" id="CHEBI:18420"/>
    </cofactor>
</comment>
<comment type="subunit">
    <text evidence="1">Homooctamer.</text>
</comment>
<comment type="similarity">
    <text evidence="1">Belongs to the DisA family.</text>
</comment>